<evidence type="ECO:0000255" key="1">
    <source>
        <dbReference type="HAMAP-Rule" id="MF_00503"/>
    </source>
</evidence>
<evidence type="ECO:0000305" key="2"/>
<protein>
    <recommendedName>
        <fullName evidence="1">Large ribosomal subunit protein bL9</fullName>
    </recommendedName>
    <alternativeName>
        <fullName evidence="2">50S ribosomal protein L9</fullName>
    </alternativeName>
</protein>
<feature type="chain" id="PRO_1000014829" description="Large ribosomal subunit protein bL9">
    <location>
        <begin position="1"/>
        <end position="150"/>
    </location>
</feature>
<proteinExistence type="inferred from homology"/>
<reference key="1">
    <citation type="journal article" date="2009" name="Environ. Microbiol.">
        <title>The genome of Polaromonas naphthalenivorans strain CJ2, isolated from coal tar-contaminated sediment, reveals physiological and metabolic versatility and evolution through extensive horizontal gene transfer.</title>
        <authorList>
            <person name="Yagi J.M."/>
            <person name="Sims D."/>
            <person name="Brettin T."/>
            <person name="Bruce D."/>
            <person name="Madsen E.L."/>
        </authorList>
    </citation>
    <scope>NUCLEOTIDE SEQUENCE [LARGE SCALE GENOMIC DNA]</scope>
    <source>
        <strain>CJ2</strain>
    </source>
</reference>
<sequence>MQIILLDKVVNLGNLGDVVKVKDGYARNFLIPFGRARRATAAAIKEFEVKRAELEKAAAAKLAEMQVQGEKLGGTTVKLTQKAGVDGRLFGSVTNADIAQEVTKQGFAVSKSQIRLPNGPIKTVGDHAINIALHTDVVVDITVTVYGETA</sequence>
<name>RL9_POLNA</name>
<accession>A1VPX1</accession>
<organism>
    <name type="scientific">Polaromonas naphthalenivorans (strain CJ2)</name>
    <dbReference type="NCBI Taxonomy" id="365044"/>
    <lineage>
        <taxon>Bacteria</taxon>
        <taxon>Pseudomonadati</taxon>
        <taxon>Pseudomonadota</taxon>
        <taxon>Betaproteobacteria</taxon>
        <taxon>Burkholderiales</taxon>
        <taxon>Comamonadaceae</taxon>
        <taxon>Polaromonas</taxon>
    </lineage>
</organism>
<gene>
    <name evidence="1" type="primary">rplI</name>
    <name type="ordered locus">Pnap_2392</name>
</gene>
<keyword id="KW-1185">Reference proteome</keyword>
<keyword id="KW-0687">Ribonucleoprotein</keyword>
<keyword id="KW-0689">Ribosomal protein</keyword>
<keyword id="KW-0694">RNA-binding</keyword>
<keyword id="KW-0699">rRNA-binding</keyword>
<dbReference type="EMBL" id="CP000529">
    <property type="protein sequence ID" value="ABM37699.1"/>
    <property type="molecule type" value="Genomic_DNA"/>
</dbReference>
<dbReference type="RefSeq" id="WP_011801777.1">
    <property type="nucleotide sequence ID" value="NC_008781.1"/>
</dbReference>
<dbReference type="SMR" id="A1VPX1"/>
<dbReference type="STRING" id="365044.Pnap_2392"/>
<dbReference type="KEGG" id="pna:Pnap_2392"/>
<dbReference type="eggNOG" id="COG0359">
    <property type="taxonomic scope" value="Bacteria"/>
</dbReference>
<dbReference type="HOGENOM" id="CLU_078938_4_1_4"/>
<dbReference type="OrthoDB" id="9788336at2"/>
<dbReference type="Proteomes" id="UP000000644">
    <property type="component" value="Chromosome"/>
</dbReference>
<dbReference type="GO" id="GO:1990904">
    <property type="term" value="C:ribonucleoprotein complex"/>
    <property type="evidence" value="ECO:0007669"/>
    <property type="project" value="UniProtKB-KW"/>
</dbReference>
<dbReference type="GO" id="GO:0005840">
    <property type="term" value="C:ribosome"/>
    <property type="evidence" value="ECO:0007669"/>
    <property type="project" value="UniProtKB-KW"/>
</dbReference>
<dbReference type="GO" id="GO:0019843">
    <property type="term" value="F:rRNA binding"/>
    <property type="evidence" value="ECO:0007669"/>
    <property type="project" value="UniProtKB-UniRule"/>
</dbReference>
<dbReference type="GO" id="GO:0003735">
    <property type="term" value="F:structural constituent of ribosome"/>
    <property type="evidence" value="ECO:0007669"/>
    <property type="project" value="InterPro"/>
</dbReference>
<dbReference type="GO" id="GO:0006412">
    <property type="term" value="P:translation"/>
    <property type="evidence" value="ECO:0007669"/>
    <property type="project" value="UniProtKB-UniRule"/>
</dbReference>
<dbReference type="Gene3D" id="3.10.430.100">
    <property type="entry name" value="Ribosomal protein L9, C-terminal domain"/>
    <property type="match status" value="1"/>
</dbReference>
<dbReference type="Gene3D" id="3.40.5.10">
    <property type="entry name" value="Ribosomal protein L9, N-terminal domain"/>
    <property type="match status" value="1"/>
</dbReference>
<dbReference type="HAMAP" id="MF_00503">
    <property type="entry name" value="Ribosomal_bL9"/>
    <property type="match status" value="1"/>
</dbReference>
<dbReference type="InterPro" id="IPR000244">
    <property type="entry name" value="Ribosomal_bL9"/>
</dbReference>
<dbReference type="InterPro" id="IPR009027">
    <property type="entry name" value="Ribosomal_bL9/RNase_H1_N"/>
</dbReference>
<dbReference type="InterPro" id="IPR020594">
    <property type="entry name" value="Ribosomal_bL9_bac/chp"/>
</dbReference>
<dbReference type="InterPro" id="IPR020069">
    <property type="entry name" value="Ribosomal_bL9_C"/>
</dbReference>
<dbReference type="InterPro" id="IPR036791">
    <property type="entry name" value="Ribosomal_bL9_C_sf"/>
</dbReference>
<dbReference type="InterPro" id="IPR020070">
    <property type="entry name" value="Ribosomal_bL9_N"/>
</dbReference>
<dbReference type="InterPro" id="IPR036935">
    <property type="entry name" value="Ribosomal_bL9_N_sf"/>
</dbReference>
<dbReference type="NCBIfam" id="TIGR00158">
    <property type="entry name" value="L9"/>
    <property type="match status" value="1"/>
</dbReference>
<dbReference type="PANTHER" id="PTHR21368">
    <property type="entry name" value="50S RIBOSOMAL PROTEIN L9"/>
    <property type="match status" value="1"/>
</dbReference>
<dbReference type="Pfam" id="PF03948">
    <property type="entry name" value="Ribosomal_L9_C"/>
    <property type="match status" value="1"/>
</dbReference>
<dbReference type="Pfam" id="PF01281">
    <property type="entry name" value="Ribosomal_L9_N"/>
    <property type="match status" value="1"/>
</dbReference>
<dbReference type="SUPFAM" id="SSF55658">
    <property type="entry name" value="L9 N-domain-like"/>
    <property type="match status" value="1"/>
</dbReference>
<dbReference type="SUPFAM" id="SSF55653">
    <property type="entry name" value="Ribosomal protein L9 C-domain"/>
    <property type="match status" value="1"/>
</dbReference>
<dbReference type="PROSITE" id="PS00651">
    <property type="entry name" value="RIBOSOMAL_L9"/>
    <property type="match status" value="1"/>
</dbReference>
<comment type="function">
    <text evidence="1">Binds to the 23S rRNA.</text>
</comment>
<comment type="similarity">
    <text evidence="1">Belongs to the bacterial ribosomal protein bL9 family.</text>
</comment>